<evidence type="ECO:0000250" key="1">
    <source>
        <dbReference type="UniProtKB" id="D6WI29"/>
    </source>
</evidence>
<evidence type="ECO:0000250" key="2">
    <source>
        <dbReference type="UniProtKB" id="Q8N884"/>
    </source>
</evidence>
<evidence type="ECO:0000269" key="3">
    <source>
    </source>
</evidence>
<evidence type="ECO:0000303" key="4">
    <source>
    </source>
</evidence>
<evidence type="ECO:0000305" key="5"/>
<dbReference type="EC" id="2.7.7.86" evidence="3"/>
<dbReference type="EMBL" id="JMDY03018347">
    <property type="status" value="NOT_ANNOTATED_CDS"/>
    <property type="molecule type" value="Genomic_DNA"/>
</dbReference>
<dbReference type="SMR" id="A0A6J1SUS3"/>
<dbReference type="OrthoDB" id="6054650at2759"/>
<dbReference type="Proteomes" id="UP000504606">
    <property type="component" value="Unplaced"/>
</dbReference>
<dbReference type="GO" id="GO:0061501">
    <property type="term" value="F:2',3'-cyclic GMP-AMP synthase activity"/>
    <property type="evidence" value="ECO:0000314"/>
    <property type="project" value="UniProtKB"/>
</dbReference>
<dbReference type="GO" id="GO:0005524">
    <property type="term" value="F:ATP binding"/>
    <property type="evidence" value="ECO:0007669"/>
    <property type="project" value="UniProtKB-KW"/>
</dbReference>
<dbReference type="GO" id="GO:0003690">
    <property type="term" value="F:double-stranded DNA binding"/>
    <property type="evidence" value="ECO:0000314"/>
    <property type="project" value="UniProtKB"/>
</dbReference>
<dbReference type="GO" id="GO:0005525">
    <property type="term" value="F:GTP binding"/>
    <property type="evidence" value="ECO:0007669"/>
    <property type="project" value="UniProtKB-KW"/>
</dbReference>
<dbReference type="GO" id="GO:0046872">
    <property type="term" value="F:metal ion binding"/>
    <property type="evidence" value="ECO:0007669"/>
    <property type="project" value="UniProtKB-KW"/>
</dbReference>
<dbReference type="GO" id="GO:0003723">
    <property type="term" value="F:RNA binding"/>
    <property type="evidence" value="ECO:0007669"/>
    <property type="project" value="UniProtKB-KW"/>
</dbReference>
<dbReference type="GO" id="GO:0051607">
    <property type="term" value="P:defense response to virus"/>
    <property type="evidence" value="ECO:0007669"/>
    <property type="project" value="UniProtKB-KW"/>
</dbReference>
<dbReference type="GO" id="GO:0045087">
    <property type="term" value="P:innate immune response"/>
    <property type="evidence" value="ECO:0007669"/>
    <property type="project" value="UniProtKB-KW"/>
</dbReference>
<dbReference type="Gene3D" id="1.10.1410.40">
    <property type="match status" value="1"/>
</dbReference>
<dbReference type="Gene3D" id="3.30.460.90">
    <property type="match status" value="1"/>
</dbReference>
<dbReference type="InterPro" id="IPR046903">
    <property type="entry name" value="Mab-21-like_nuc_Trfase"/>
</dbReference>
<dbReference type="InterPro" id="IPR046906">
    <property type="entry name" value="Mab-21_HhH/H2TH-like"/>
</dbReference>
<dbReference type="InterPro" id="IPR024810">
    <property type="entry name" value="MAB21L/cGLR"/>
</dbReference>
<dbReference type="PANTHER" id="PTHR10656">
    <property type="entry name" value="CELL FATE DETERMINING PROTEIN MAB21-RELATED"/>
    <property type="match status" value="1"/>
</dbReference>
<dbReference type="PANTHER" id="PTHR10656:SF42">
    <property type="entry name" value="CYCLIC GMP-AMP SYNTHASE-LIKE PROTEIN-RELATED"/>
    <property type="match status" value="1"/>
</dbReference>
<dbReference type="Pfam" id="PF03281">
    <property type="entry name" value="Mab-21"/>
    <property type="match status" value="1"/>
</dbReference>
<dbReference type="Pfam" id="PF20266">
    <property type="entry name" value="Mab-21_C"/>
    <property type="match status" value="1"/>
</dbReference>
<dbReference type="SMART" id="SM01265">
    <property type="entry name" value="Mab-21"/>
    <property type="match status" value="1"/>
</dbReference>
<reference key="1">
    <citation type="journal article" date="2020" name="BMC Biol.">
        <title>Genome-enabled insights into the biology of thrips as crop pests.</title>
        <authorList>
            <person name="Rotenberg D."/>
            <person name="Baumann A.A."/>
            <person name="Ben-Mahmoud S."/>
            <person name="Christiaens O."/>
            <person name="Dermauw W."/>
            <person name="Ioannidis P."/>
            <person name="Jacobs C.G.C."/>
            <person name="Vargas Jentzsch I.M."/>
            <person name="Oliver J.E."/>
            <person name="Poelchau M.F."/>
            <person name="Rajarapu S.P."/>
            <person name="Schneweis D.J."/>
            <person name="Snoeck S."/>
            <person name="Taning C.N.T."/>
            <person name="Wei D."/>
            <person name="Widana Gamage S.M.K."/>
            <person name="Hughes D.S.T."/>
            <person name="Murali S.C."/>
            <person name="Bailey S.T."/>
            <person name="Bejerman N.E."/>
            <person name="Holmes C.J."/>
            <person name="Jennings E.C."/>
            <person name="Rosendale A.J."/>
            <person name="Rosselot A."/>
            <person name="Hervey K."/>
            <person name="Schneweis B.A."/>
            <person name="Cheng S."/>
            <person name="Childers C."/>
            <person name="Simao F.A."/>
            <person name="Dietzgen R.G."/>
            <person name="Chao H."/>
            <person name="Dinh H."/>
            <person name="Doddapaneni H.V."/>
            <person name="Dugan S."/>
            <person name="Han Y."/>
            <person name="Lee S.L."/>
            <person name="Muzny D.M."/>
            <person name="Qu J."/>
            <person name="Worley K.C."/>
            <person name="Benoit J.B."/>
            <person name="Friedrich M."/>
            <person name="Jones J.W."/>
            <person name="Panfilio K.A."/>
            <person name="Park Y."/>
            <person name="Robertson H.M."/>
            <person name="Smagghe G."/>
            <person name="Ullman D.E."/>
            <person name="van der Zee M."/>
            <person name="Van Leeuwen T."/>
            <person name="Veenstra J.A."/>
            <person name="Waterhouse R.M."/>
            <person name="Weirauch M.T."/>
            <person name="Werren J.H."/>
            <person name="Whitfield A.E."/>
            <person name="Zdobnov E.M."/>
            <person name="Gibbs R.A."/>
            <person name="Richards S."/>
        </authorList>
    </citation>
    <scope>NUCLEOTIDE SEQUENCE [LARGE SCALE GENOMIC DNA]</scope>
</reference>
<reference key="2">
    <citation type="journal article" date="2023" name="Cell">
        <title>cGLRs are a diverse family of pattern recognition receptors in innate immunity.</title>
        <authorList>
            <person name="Li Y."/>
            <person name="Slavik K.M."/>
            <person name="Toyoda H.C."/>
            <person name="Morehouse B.R."/>
            <person name="de Oliveira Mann C.C."/>
            <person name="Elek A."/>
            <person name="Levy S."/>
            <person name="Wang Z."/>
            <person name="Mears K.S."/>
            <person name="Liu J."/>
            <person name="Kashin D."/>
            <person name="Guo X."/>
            <person name="Mass T."/>
            <person name="Sebe-Pedros A."/>
            <person name="Schwede F."/>
            <person name="Kranzusch P.J."/>
        </authorList>
    </citation>
    <scope>FUNCTION</scope>
    <scope>CATALYTIC ACTIVITY</scope>
</reference>
<comment type="function">
    <text evidence="3">Nucleotidyltransferase that catalyzes the formation of cyclic GMP-AMP (2',3'-cGAMP) from ATP and GTP and plays a key role in innate immunity (PubMed:37379839). Acts as a key sensor of double-stranded RNA (dsRNA), the presence of dsRNA in the cytoplasm being a danger signal that triggers the immune responses (PubMed:37379839). Directly binds dsRNA, activating the nucleotidyltransferase activity, leading to synthesis of 2',3'-cGAMP, a second messenger that binds to and activates Sting, thereby triggering the immune response via activation of the NF-kappa-B transcription factor (PubMed:37379839).</text>
</comment>
<comment type="catalytic activity">
    <reaction evidence="3">
        <text>GTP + ATP = 2',3'-cGAMP + 2 diphosphate</text>
        <dbReference type="Rhea" id="RHEA:42064"/>
        <dbReference type="ChEBI" id="CHEBI:30616"/>
        <dbReference type="ChEBI" id="CHEBI:33019"/>
        <dbReference type="ChEBI" id="CHEBI:37565"/>
        <dbReference type="ChEBI" id="CHEBI:143093"/>
        <dbReference type="EC" id="2.7.7.86"/>
    </reaction>
    <physiologicalReaction direction="left-to-right" evidence="3">
        <dbReference type="Rhea" id="RHEA:42065"/>
    </physiologicalReaction>
</comment>
<comment type="catalytic activity">
    <reaction evidence="3">
        <text>GTP + ATP = pppGp(2'-5')A + diphosphate</text>
        <dbReference type="Rhea" id="RHEA:23748"/>
        <dbReference type="ChEBI" id="CHEBI:30616"/>
        <dbReference type="ChEBI" id="CHEBI:33019"/>
        <dbReference type="ChEBI" id="CHEBI:37565"/>
        <dbReference type="ChEBI" id="CHEBI:78318"/>
    </reaction>
    <physiologicalReaction direction="left-to-right" evidence="3">
        <dbReference type="Rhea" id="RHEA:23749"/>
    </physiologicalReaction>
</comment>
<comment type="catalytic activity">
    <reaction evidence="3">
        <text>pppGp(2'-5')A = 2',3'-cGAMP + diphosphate</text>
        <dbReference type="Rhea" id="RHEA:23924"/>
        <dbReference type="ChEBI" id="CHEBI:33019"/>
        <dbReference type="ChEBI" id="CHEBI:78318"/>
        <dbReference type="ChEBI" id="CHEBI:143093"/>
    </reaction>
    <physiologicalReaction direction="left-to-right" evidence="3">
        <dbReference type="Rhea" id="RHEA:23925"/>
    </physiologicalReaction>
</comment>
<comment type="cofactor">
    <cofactor evidence="1">
        <name>Mg(2+)</name>
        <dbReference type="ChEBI" id="CHEBI:18420"/>
    </cofactor>
    <cofactor evidence="1">
        <name>Mn(2+)</name>
        <dbReference type="ChEBI" id="CHEBI:29035"/>
    </cofactor>
</comment>
<comment type="similarity">
    <text evidence="5">Belongs to the mab-21 family.</text>
</comment>
<accession>A0A6J1SUS3</accession>
<protein>
    <recommendedName>
        <fullName evidence="5">Cyclic GMP-AMP synthase-like receptor</fullName>
        <shortName evidence="4">Fo-cGLR</shortName>
        <ecNumber evidence="3">2.7.7.86</ecNumber>
    </recommendedName>
</protein>
<keyword id="KW-0051">Antiviral defense</keyword>
<keyword id="KW-0067">ATP-binding</keyword>
<keyword id="KW-0342">GTP-binding</keyword>
<keyword id="KW-0391">Immunity</keyword>
<keyword id="KW-0399">Innate immunity</keyword>
<keyword id="KW-0460">Magnesium</keyword>
<keyword id="KW-0464">Manganese</keyword>
<keyword id="KW-0479">Metal-binding</keyword>
<keyword id="KW-0547">Nucleotide-binding</keyword>
<keyword id="KW-0548">Nucleotidyltransferase</keyword>
<keyword id="KW-0675">Receptor</keyword>
<keyword id="KW-1185">Reference proteome</keyword>
<keyword id="KW-0694">RNA-binding</keyword>
<keyword id="KW-0808">Transferase</keyword>
<organism>
    <name type="scientific">Frankliniella occidentalis</name>
    <name type="common">Western flower thrips</name>
    <name type="synonym">Euthrips occidentalis</name>
    <dbReference type="NCBI Taxonomy" id="133901"/>
    <lineage>
        <taxon>Eukaryota</taxon>
        <taxon>Metazoa</taxon>
        <taxon>Ecdysozoa</taxon>
        <taxon>Arthropoda</taxon>
        <taxon>Hexapoda</taxon>
        <taxon>Insecta</taxon>
        <taxon>Pterygota</taxon>
        <taxon>Neoptera</taxon>
        <taxon>Paraneoptera</taxon>
        <taxon>Thysanoptera</taxon>
        <taxon>Terebrantia</taxon>
        <taxon>Thripoidea</taxon>
        <taxon>Thripidae</taxon>
        <taxon>Frankliniella</taxon>
    </lineage>
</organism>
<name>CGLR_FRAOC</name>
<gene>
    <name evidence="4" type="primary">cGLR</name>
</gene>
<sequence length="431" mass="50196">MSLSRSLDLTQEDYAVQDAILQYISSNFVSLKPPDVKFFKRHLENVTKVLIQMMRKEDNLFNLIFQKERVAGSFWDKLKIGHPIEFDKNFVLTLPPALYKNIKFTPASPSYVTVNVQNGLKIVKSSKCRTYRPDWFDDNGNILSDKLRFWMESVVNKALATLPPLPNKKYQLEIEGTCYEIGTRKSGPAVTVEVNIDSSGSTYLGITQFCIDLVPAFEFQTKDWPHHIRQCPADTQDKTWNLVPKPLKPEENTADGNIPARLQWRLSFHNQESYIIHNLNHFKAVLKLLKKLRDVKFDQYKMSSYALKTVFMLEKERQNNDFWRRPLSSTFLHMLTVLTEWYGKGKIPFYWDKQHNLLGKLSKDQIKQVYCTLQKINNRIYEGLQSKCESKCDHFIIASTLLDSEELLKIKKDIIVDRSGNKPLAKRQRCS</sequence>
<proteinExistence type="evidence at protein level"/>
<feature type="chain" id="PRO_0000460019" description="Cyclic GMP-AMP synthase-like receptor">
    <location>
        <begin position="1"/>
        <end position="431"/>
    </location>
</feature>
<feature type="binding site" evidence="2">
    <location>
        <position position="73"/>
    </location>
    <ligand>
        <name>ATP</name>
        <dbReference type="ChEBI" id="CHEBI:30616"/>
    </ligand>
</feature>
<feature type="binding site" evidence="2">
    <location>
        <begin position="85"/>
        <end position="87"/>
    </location>
    <ligand>
        <name>ATP</name>
        <dbReference type="ChEBI" id="CHEBI:30616"/>
    </ligand>
</feature>
<feature type="binding site" evidence="2">
    <location>
        <position position="85"/>
    </location>
    <ligand>
        <name>Mg(2+)</name>
        <dbReference type="ChEBI" id="CHEBI:18420"/>
        <note>catalytic</note>
    </ligand>
</feature>
<feature type="binding site" evidence="2">
    <location>
        <position position="87"/>
    </location>
    <ligand>
        <name>Mg(2+)</name>
        <dbReference type="ChEBI" id="CHEBI:18420"/>
        <note>catalytic</note>
    </ligand>
</feature>
<feature type="binding site" evidence="2">
    <location>
        <position position="212"/>
    </location>
    <ligand>
        <name>GTP</name>
        <dbReference type="ChEBI" id="CHEBI:37565"/>
    </ligand>
</feature>
<feature type="binding site" evidence="2">
    <location>
        <position position="212"/>
    </location>
    <ligand>
        <name>Mg(2+)</name>
        <dbReference type="ChEBI" id="CHEBI:18420"/>
        <note>catalytic</note>
    </ligand>
</feature>
<feature type="binding site" evidence="2">
    <location>
        <position position="290"/>
    </location>
    <ligand>
        <name>ATP</name>
        <dbReference type="ChEBI" id="CHEBI:30616"/>
    </ligand>
</feature>
<feature type="binding site" evidence="2">
    <location>
        <begin position="304"/>
        <end position="308"/>
    </location>
    <ligand>
        <name>ATP</name>
        <dbReference type="ChEBI" id="CHEBI:30616"/>
    </ligand>
</feature>
<feature type="binding site" evidence="1">
    <location>
        <position position="316"/>
    </location>
    <ligand>
        <name>Mn(2+)</name>
        <dbReference type="ChEBI" id="CHEBI:29035"/>
    </ligand>
</feature>